<sequence>MTAKPPFKVIIVGGSIAGLTLAHCLSKAGIDYIVLEKRKHIAPQEGASIGILPHGGRILEQLGLFYLVEEQIEPLHTAHQYFPDGFAHTTKAPQVIYERFGLPLAFLERRRMLRALYDTLPDSSQVLVNKAVTSVEREVSDLMRVTTYDGSVYRGNLVVGADGVHSRVRAEMWRLATSQSPGVFPEHEMSAMAVEYACIFGISSSVPKLQPGEQVASFNNGRSYLTFPGKNGRVFWFLLLKLDRKYSYSNAPRFSSTDAEKRAERFADDHIWAGVNFRDLWKSKEVFSFVNLEEYLFQQWHWERIVCIGDSMHKMTPNTGQGANCAIEDAAALVNRLHRALKATPDGSSLSSGDIDDLLGEFNRARSRRVREIYQGSRMVVRLQARQNLFLKLLGRYYLPYRGEVAADAASKIIAPAEHLDFLPLATRSATGWHQFKPGQSKTLLIPFLYPVVAFSLCVLAWIGNDYLRNGVVFA</sequence>
<accession>A4DA41</accession>
<name>SPYC_ASPFU</name>
<proteinExistence type="evidence at protein level"/>
<evidence type="ECO:0000250" key="1">
    <source>
        <dbReference type="UniProtKB" id="B8M9J8"/>
    </source>
</evidence>
<evidence type="ECO:0000255" key="2"/>
<evidence type="ECO:0000269" key="3">
    <source>
    </source>
</evidence>
<evidence type="ECO:0000303" key="4">
    <source>
    </source>
</evidence>
<evidence type="ECO:0000305" key="5"/>
<reference key="1">
    <citation type="journal article" date="2005" name="Nature">
        <title>Genomic sequence of the pathogenic and allergenic filamentous fungus Aspergillus fumigatus.</title>
        <authorList>
            <person name="Nierman W.C."/>
            <person name="Pain A."/>
            <person name="Anderson M.J."/>
            <person name="Wortman J.R."/>
            <person name="Kim H.S."/>
            <person name="Arroyo J."/>
            <person name="Berriman M."/>
            <person name="Abe K."/>
            <person name="Archer D.B."/>
            <person name="Bermejo C."/>
            <person name="Bennett J.W."/>
            <person name="Bowyer P."/>
            <person name="Chen D."/>
            <person name="Collins M."/>
            <person name="Coulsen R."/>
            <person name="Davies R."/>
            <person name="Dyer P.S."/>
            <person name="Farman M.L."/>
            <person name="Fedorova N."/>
            <person name="Fedorova N.D."/>
            <person name="Feldblyum T.V."/>
            <person name="Fischer R."/>
            <person name="Fosker N."/>
            <person name="Fraser A."/>
            <person name="Garcia J.L."/>
            <person name="Garcia M.J."/>
            <person name="Goble A."/>
            <person name="Goldman G.H."/>
            <person name="Gomi K."/>
            <person name="Griffith-Jones S."/>
            <person name="Gwilliam R."/>
            <person name="Haas B.J."/>
            <person name="Haas H."/>
            <person name="Harris D.E."/>
            <person name="Horiuchi H."/>
            <person name="Huang J."/>
            <person name="Humphray S."/>
            <person name="Jimenez J."/>
            <person name="Keller N."/>
            <person name="Khouri H."/>
            <person name="Kitamoto K."/>
            <person name="Kobayashi T."/>
            <person name="Konzack S."/>
            <person name="Kulkarni R."/>
            <person name="Kumagai T."/>
            <person name="Lafton A."/>
            <person name="Latge J.-P."/>
            <person name="Li W."/>
            <person name="Lord A."/>
            <person name="Lu C."/>
            <person name="Majoros W.H."/>
            <person name="May G.S."/>
            <person name="Miller B.L."/>
            <person name="Mohamoud Y."/>
            <person name="Molina M."/>
            <person name="Monod M."/>
            <person name="Mouyna I."/>
            <person name="Mulligan S."/>
            <person name="Murphy L.D."/>
            <person name="O'Neil S."/>
            <person name="Paulsen I."/>
            <person name="Penalva M.A."/>
            <person name="Pertea M."/>
            <person name="Price C."/>
            <person name="Pritchard B.L."/>
            <person name="Quail M.A."/>
            <person name="Rabbinowitsch E."/>
            <person name="Rawlins N."/>
            <person name="Rajandream M.A."/>
            <person name="Reichard U."/>
            <person name="Renauld H."/>
            <person name="Robson G.D."/>
            <person name="Rodriguez de Cordoba S."/>
            <person name="Rodriguez-Pena J.M."/>
            <person name="Ronning C.M."/>
            <person name="Rutter S."/>
            <person name="Salzberg S.L."/>
            <person name="Sanchez M."/>
            <person name="Sanchez-Ferrero J.C."/>
            <person name="Saunders D."/>
            <person name="Seeger K."/>
            <person name="Squares R."/>
            <person name="Squares S."/>
            <person name="Takeuchi M."/>
            <person name="Tekaia F."/>
            <person name="Turner G."/>
            <person name="Vazquez de Aldana C.R."/>
            <person name="Weidman J."/>
            <person name="White O."/>
            <person name="Woodward J.R."/>
            <person name="Yu J.-H."/>
            <person name="Fraser C.M."/>
            <person name="Galagan J.E."/>
            <person name="Asai K."/>
            <person name="Machida M."/>
            <person name="Hall N."/>
            <person name="Barrell B.G."/>
            <person name="Denning D.W."/>
        </authorList>
    </citation>
    <scope>NUCLEOTIDE SEQUENCE [LARGE SCALE GENOMIC DNA]</scope>
    <source>
        <strain>ATCC MYA-4609 / CBS 101355 / FGSC A1100 / Af293</strain>
    </source>
</reference>
<reference key="2">
    <citation type="journal article" date="2023" name="Chem. Sci.">
        <title>A heterologous expression platform in Aspergillus nidulans for the elucidation of cryptic secondary metabolism biosynthetic gene clusters: discovery of the Aspergillus fumigatus sartorypyrone biosynthetic pathway.</title>
        <authorList>
            <person name="Lin S.Y."/>
            <person name="Oakley C.E."/>
            <person name="Jenkinson C.B."/>
            <person name="Chiang Y.M."/>
            <person name="Lee C.K."/>
            <person name="Jones C.G."/>
            <person name="Seidler P.M."/>
            <person name="Nelson H.M."/>
            <person name="Todd R.B."/>
            <person name="Wang C.C.C."/>
            <person name="Oakley B.R."/>
        </authorList>
    </citation>
    <scope>FUNCTION</scope>
    <scope>DISRUPTION PHENOTYPE</scope>
    <scope>CATALYTIC ACTIVITY</scope>
    <scope>PATHWAY</scope>
</reference>
<keyword id="KW-0274">FAD</keyword>
<keyword id="KW-0285">Flavoprotein</keyword>
<keyword id="KW-0472">Membrane</keyword>
<keyword id="KW-0503">Monooxygenase</keyword>
<keyword id="KW-0560">Oxidoreductase</keyword>
<keyword id="KW-1185">Reference proteome</keyword>
<keyword id="KW-0732">Signal</keyword>
<keyword id="KW-0812">Transmembrane</keyword>
<keyword id="KW-1133">Transmembrane helix</keyword>
<dbReference type="EC" id="1.-.-.-" evidence="3"/>
<dbReference type="EMBL" id="AAHF01000014">
    <property type="protein sequence ID" value="EBA27209.1"/>
    <property type="molecule type" value="Genomic_DNA"/>
</dbReference>
<dbReference type="RefSeq" id="XP_001481403.1">
    <property type="nucleotide sequence ID" value="XM_001481353.1"/>
</dbReference>
<dbReference type="SMR" id="A4DA41"/>
<dbReference type="STRING" id="330879.A4DA41"/>
<dbReference type="EnsemblFungi" id="EBA27209">
    <property type="protein sequence ID" value="EBA27209"/>
    <property type="gene ID" value="AFUA_8G02380"/>
</dbReference>
<dbReference type="GeneID" id="5077278"/>
<dbReference type="KEGG" id="afm:AFUA_8G02380"/>
<dbReference type="VEuPathDB" id="FungiDB:Afu8g02380"/>
<dbReference type="eggNOG" id="KOG2614">
    <property type="taxonomic scope" value="Eukaryota"/>
</dbReference>
<dbReference type="HOGENOM" id="CLU_009665_12_2_1"/>
<dbReference type="InParanoid" id="A4DA41"/>
<dbReference type="OMA" id="KMAPNTG"/>
<dbReference type="OrthoDB" id="10029326at2759"/>
<dbReference type="UniPathway" id="UPA00213"/>
<dbReference type="Proteomes" id="UP000002530">
    <property type="component" value="Chromosome 8"/>
</dbReference>
<dbReference type="GO" id="GO:0016020">
    <property type="term" value="C:membrane"/>
    <property type="evidence" value="ECO:0007669"/>
    <property type="project" value="UniProtKB-SubCell"/>
</dbReference>
<dbReference type="GO" id="GO:0071949">
    <property type="term" value="F:FAD binding"/>
    <property type="evidence" value="ECO:0007669"/>
    <property type="project" value="InterPro"/>
</dbReference>
<dbReference type="GO" id="GO:0018658">
    <property type="term" value="F:salicylate 1-monooxygenase activity"/>
    <property type="evidence" value="ECO:0007669"/>
    <property type="project" value="UniProtKB-EC"/>
</dbReference>
<dbReference type="GO" id="GO:0044550">
    <property type="term" value="P:secondary metabolite biosynthetic process"/>
    <property type="evidence" value="ECO:0000318"/>
    <property type="project" value="GO_Central"/>
</dbReference>
<dbReference type="Gene3D" id="3.50.50.60">
    <property type="entry name" value="FAD/NAD(P)-binding domain"/>
    <property type="match status" value="1"/>
</dbReference>
<dbReference type="InterPro" id="IPR002938">
    <property type="entry name" value="FAD-bd"/>
</dbReference>
<dbReference type="InterPro" id="IPR036188">
    <property type="entry name" value="FAD/NAD-bd_sf"/>
</dbReference>
<dbReference type="InterPro" id="IPR050562">
    <property type="entry name" value="FAD_mOase_fung"/>
</dbReference>
<dbReference type="PANTHER" id="PTHR47356:SF2">
    <property type="entry name" value="FAD-BINDING DOMAIN-CONTAINING PROTEIN-RELATED"/>
    <property type="match status" value="1"/>
</dbReference>
<dbReference type="PANTHER" id="PTHR47356">
    <property type="entry name" value="FAD-DEPENDENT MONOOXYGENASE ASQG-RELATED"/>
    <property type="match status" value="1"/>
</dbReference>
<dbReference type="Pfam" id="PF01494">
    <property type="entry name" value="FAD_binding_3"/>
    <property type="match status" value="1"/>
</dbReference>
<dbReference type="PRINTS" id="PR00420">
    <property type="entry name" value="RNGMNOXGNASE"/>
</dbReference>
<dbReference type="SUPFAM" id="SSF51905">
    <property type="entry name" value="FAD/NAD(P)-binding domain"/>
    <property type="match status" value="1"/>
</dbReference>
<organism>
    <name type="scientific">Aspergillus fumigatus (strain ATCC MYA-4609 / CBS 101355 / FGSC A1100 / Af293)</name>
    <name type="common">Neosartorya fumigata</name>
    <dbReference type="NCBI Taxonomy" id="330879"/>
    <lineage>
        <taxon>Eukaryota</taxon>
        <taxon>Fungi</taxon>
        <taxon>Dikarya</taxon>
        <taxon>Ascomycota</taxon>
        <taxon>Pezizomycotina</taxon>
        <taxon>Eurotiomycetes</taxon>
        <taxon>Eurotiomycetidae</taxon>
        <taxon>Eurotiales</taxon>
        <taxon>Aspergillaceae</taxon>
        <taxon>Aspergillus</taxon>
        <taxon>Aspergillus subgen. Fumigati</taxon>
    </lineage>
</organism>
<comment type="function">
    <text evidence="3">FAD-dependent monooxygenase spyC; part of the gene cluster that mediates the biosynthesis of meroterpenoids called sartorypyrones (PubMed:37860661). Within the pathway, spyC catalyzes the epoxidation of geranylgeranyl-triacetate lactone at the terminal olein to yield epoxygeranylgeranyl-triacetate lactone (PubMed:37860661). The biosynthesis of sartorypyrones begins with the production of triacetic acid lactone (TAL) by the NR-PKS spyA using one molecule of acetyl-CoA and two molecules of malonyl-CoA. The prenyltransferase spyF then conjugates geranylgeranyl pyrophosphate (GGPP) to TAL to form geranylgeranyl-triacetate lactone, for which the pathway-specific geranylgeranyl pyrophosphate synthase (GGPS) spyE is required to provide GGPP. Subsequently, geranylgeranyl-triacetate lactone is epoxidized at the terminal olein by the FAD-dependent monooxygenase spyC, followed by cyclization of the terpenoid component catalyzed by the terpene cyclase spyD to produce both the bicyclic sartorypyrone F and the monocyclic sartorypyrone D. Finally, the last step of the biosynthesis involves the acetylation of the meroterpenoids sartorypyrones D and F by the acetyltransferase SpyB to produce sartorypyrones A and G, respectively (PubMed:37860661).</text>
</comment>
<comment type="catalytic activity">
    <reaction evidence="3">
        <text>(2E,6E,10E)-geranylgeranyl-triacetate lactone + AH2 + O2 = (S)-(2E,6E,10E)-epoxygeranylgeranyl-triacetate lactone + A + H2O</text>
        <dbReference type="Rhea" id="RHEA:80867"/>
        <dbReference type="ChEBI" id="CHEBI:13193"/>
        <dbReference type="ChEBI" id="CHEBI:15377"/>
        <dbReference type="ChEBI" id="CHEBI:15379"/>
        <dbReference type="ChEBI" id="CHEBI:17499"/>
        <dbReference type="ChEBI" id="CHEBI:231737"/>
        <dbReference type="ChEBI" id="CHEBI:231738"/>
    </reaction>
    <physiologicalReaction direction="left-to-right" evidence="3">
        <dbReference type="Rhea" id="RHEA:80868"/>
    </physiologicalReaction>
</comment>
<comment type="cofactor">
    <cofactor evidence="5">
        <name>FAD</name>
        <dbReference type="ChEBI" id="CHEBI:57692"/>
    </cofactor>
</comment>
<comment type="pathway">
    <text evidence="3">Secondary metabolite biosynthesis; terpenoid biosynthesis.</text>
</comment>
<comment type="subcellular location">
    <subcellularLocation>
        <location evidence="2">Membrane</location>
        <topology evidence="2">Single-pass membrane protein</topology>
    </subcellularLocation>
</comment>
<comment type="disruption phenotype">
    <text evidence="3">Accumulates 2 prenylated polyketides including geranylgeranyl-triacetate lactone.</text>
</comment>
<comment type="similarity">
    <text evidence="5">Belongs to the paxM FAD-dependent monooxygenase family.</text>
</comment>
<feature type="signal peptide" evidence="2">
    <location>
        <begin position="1"/>
        <end position="24"/>
    </location>
</feature>
<feature type="chain" id="PRO_0000461220" description="FAD-dependent monooxygenase spyC" evidence="2">
    <location>
        <begin position="25"/>
        <end position="475"/>
    </location>
</feature>
<feature type="transmembrane region" description="Helical" evidence="2">
    <location>
        <begin position="444"/>
        <end position="464"/>
    </location>
</feature>
<feature type="binding site" evidence="1">
    <location>
        <position position="36"/>
    </location>
    <ligand>
        <name>FAD</name>
        <dbReference type="ChEBI" id="CHEBI:57692"/>
    </ligand>
</feature>
<feature type="binding site" evidence="1">
    <location>
        <position position="50"/>
    </location>
    <ligand>
        <name>FAD</name>
        <dbReference type="ChEBI" id="CHEBI:57692"/>
    </ligand>
</feature>
<feature type="binding site" evidence="1">
    <location>
        <position position="109"/>
    </location>
    <ligand>
        <name>FAD</name>
        <dbReference type="ChEBI" id="CHEBI:57692"/>
    </ligand>
</feature>
<feature type="binding site" evidence="1">
    <location>
        <position position="310"/>
    </location>
    <ligand>
        <name>FAD</name>
        <dbReference type="ChEBI" id="CHEBI:57692"/>
    </ligand>
</feature>
<feature type="binding site" evidence="1">
    <location>
        <position position="323"/>
    </location>
    <ligand>
        <name>FAD</name>
        <dbReference type="ChEBI" id="CHEBI:57692"/>
    </ligand>
</feature>
<gene>
    <name evidence="4" type="primary">spyC</name>
    <name type="ORF">AFUA_8G02380</name>
</gene>
<protein>
    <recommendedName>
        <fullName evidence="4">FAD-dependent monooxygenase spyC</fullName>
        <ecNumber evidence="3">1.-.-.-</ecNumber>
    </recommendedName>
    <alternativeName>
        <fullName evidence="4">Sartorypyrone biosynthesis cluster protein C</fullName>
    </alternativeName>
</protein>